<evidence type="ECO:0000255" key="1"/>
<evidence type="ECO:0000255" key="2">
    <source>
        <dbReference type="PROSITE-ProRule" id="PRU00258"/>
    </source>
</evidence>
<evidence type="ECO:0000255" key="3">
    <source>
        <dbReference type="PROSITE-ProRule" id="PRU01348"/>
    </source>
</evidence>
<evidence type="ECO:0000255" key="4">
    <source>
        <dbReference type="PROSITE-ProRule" id="PRU01363"/>
    </source>
</evidence>
<evidence type="ECO:0000255" key="5">
    <source>
        <dbReference type="PROSITE-ProRule" id="PRU10022"/>
    </source>
</evidence>
<evidence type="ECO:0000256" key="6">
    <source>
        <dbReference type="SAM" id="MobiDB-lite"/>
    </source>
</evidence>
<evidence type="ECO:0000269" key="7">
    <source>
    </source>
</evidence>
<evidence type="ECO:0000269" key="8">
    <source>
    </source>
</evidence>
<evidence type="ECO:0000303" key="9">
    <source>
    </source>
</evidence>
<evidence type="ECO:0000303" key="10">
    <source>
    </source>
</evidence>
<evidence type="ECO:0000305" key="11">
    <source>
    </source>
</evidence>
<evidence type="ECO:0000305" key="12">
    <source>
    </source>
</evidence>
<keyword id="KW-0012">Acyltransferase</keyword>
<keyword id="KW-0489">Methyltransferase</keyword>
<keyword id="KW-0511">Multifunctional enzyme</keyword>
<keyword id="KW-0596">Phosphopantetheine</keyword>
<keyword id="KW-0597">Phosphoprotein</keyword>
<keyword id="KW-1185">Reference proteome</keyword>
<keyword id="KW-0677">Repeat</keyword>
<keyword id="KW-0808">Transferase</keyword>
<reference key="1">
    <citation type="submission" date="2005-09" db="EMBL/GenBank/DDBJ databases">
        <title>Annotation of the Aspergillus terreus NIH2624 genome.</title>
        <authorList>
            <person name="Birren B.W."/>
            <person name="Lander E.S."/>
            <person name="Galagan J.E."/>
            <person name="Nusbaum C."/>
            <person name="Devon K."/>
            <person name="Henn M."/>
            <person name="Ma L.-J."/>
            <person name="Jaffe D.B."/>
            <person name="Butler J."/>
            <person name="Alvarez P."/>
            <person name="Gnerre S."/>
            <person name="Grabherr M."/>
            <person name="Kleber M."/>
            <person name="Mauceli E.W."/>
            <person name="Brockman W."/>
            <person name="Rounsley S."/>
            <person name="Young S.K."/>
            <person name="LaButti K."/>
            <person name="Pushparaj V."/>
            <person name="DeCaprio D."/>
            <person name="Crawford M."/>
            <person name="Koehrsen M."/>
            <person name="Engels R."/>
            <person name="Montgomery P."/>
            <person name="Pearson M."/>
            <person name="Howarth C."/>
            <person name="Larson L."/>
            <person name="Luoma S."/>
            <person name="White J."/>
            <person name="Alvarado L."/>
            <person name="Kodira C.D."/>
            <person name="Zeng Q."/>
            <person name="Oleary S."/>
            <person name="Yandava C."/>
            <person name="Denning D.W."/>
            <person name="Nierman W.C."/>
            <person name="Milne T."/>
            <person name="Madden K."/>
        </authorList>
    </citation>
    <scope>NUCLEOTIDE SEQUENCE [LARGE SCALE GENOMIC DNA]</scope>
    <source>
        <strain>NIH 2624 / FGSC A1156</strain>
    </source>
</reference>
<reference key="2">
    <citation type="journal article" date="2013" name="J. Am. Chem. Soc.">
        <title>An efficient system for heterologous expression of secondary metabolite genes in Aspergillus nidulans.</title>
        <authorList>
            <person name="Chiang Y.M."/>
            <person name="Oakley C.E."/>
            <person name="Ahuja M."/>
            <person name="Entwistle R."/>
            <person name="Schultz A."/>
            <person name="Chang S.L."/>
            <person name="Sung C.T."/>
            <person name="Wang C.C."/>
            <person name="Oakley B.R."/>
        </authorList>
    </citation>
    <scope>FUNCTION</scope>
</reference>
<reference key="3">
    <citation type="journal article" date="2014" name="Chem. Biol.">
        <title>Aryl-aldehyde formation in fungal polyketides: discovery and characterization of a distinct biosynthetic mechanism.</title>
        <authorList>
            <person name="Wang M."/>
            <person name="Beissner M."/>
            <person name="Zhao H."/>
        </authorList>
    </citation>
    <scope>FUNCTION</scope>
    <scope>CATALYTIC ACTIVITY</scope>
    <scope>DOMAIN</scope>
    <scope>MUTAGENESIS OF SER-1651 AND SER-1772</scope>
    <scope>PATHWAY</scope>
</reference>
<reference key="4">
    <citation type="journal article" date="2020" name="Angew. Chem. Int. Ed.">
        <title>Collaborative biosynthesis of a class of bioactive azaphilones by two separate gene clusters containing four PKS/NRPSs with transcriptional cosstalk in fungi.</title>
        <authorList>
            <person name="Huang X."/>
            <person name="Zhang W."/>
            <person name="Tang S."/>
            <person name="Wei S."/>
            <person name="Lu X."/>
        </authorList>
    </citation>
    <scope>FUNCTION</scope>
    <scope>INDUCTION</scope>
    <scope>DISRUPTION PHENOTYPE</scope>
    <scope>CATALYTIC ACTIVITY</scope>
    <scope>PATHWAY</scope>
    <scope>BIOTECHNOLOGY</scope>
</reference>
<proteinExistence type="evidence at protein level"/>
<dbReference type="EC" id="2.3.1.-" evidence="7 8"/>
<dbReference type="EMBL" id="CH476598">
    <property type="protein sequence ID" value="EAU35431.1"/>
    <property type="molecule type" value="Genomic_DNA"/>
</dbReference>
<dbReference type="RefSeq" id="XP_001212807.1">
    <property type="nucleotide sequence ID" value="XM_001212807.1"/>
</dbReference>
<dbReference type="SMR" id="Q0CRQ5"/>
<dbReference type="STRING" id="341663.Q0CRQ5"/>
<dbReference type="ESTHER" id="asptn-5moas">
    <property type="family name" value="BD-FAE"/>
</dbReference>
<dbReference type="EnsemblFungi" id="EAU35431">
    <property type="protein sequence ID" value="EAU35431"/>
    <property type="gene ID" value="ATEG_03629"/>
</dbReference>
<dbReference type="GeneID" id="4318785"/>
<dbReference type="VEuPathDB" id="FungiDB:ATEG_03629"/>
<dbReference type="eggNOG" id="KOG1202">
    <property type="taxonomic scope" value="Eukaryota"/>
</dbReference>
<dbReference type="HOGENOM" id="CLU_000022_6_3_1"/>
<dbReference type="OMA" id="CASDYND"/>
<dbReference type="OrthoDB" id="429813at2759"/>
<dbReference type="Proteomes" id="UP000007963">
    <property type="component" value="Unassembled WGS sequence"/>
</dbReference>
<dbReference type="GO" id="GO:0004315">
    <property type="term" value="F:3-oxoacyl-[acyl-carrier-protein] synthase activity"/>
    <property type="evidence" value="ECO:0007669"/>
    <property type="project" value="InterPro"/>
</dbReference>
<dbReference type="GO" id="GO:0004312">
    <property type="term" value="F:fatty acid synthase activity"/>
    <property type="evidence" value="ECO:0007669"/>
    <property type="project" value="TreeGrafter"/>
</dbReference>
<dbReference type="GO" id="GO:0008168">
    <property type="term" value="F:methyltransferase activity"/>
    <property type="evidence" value="ECO:0007669"/>
    <property type="project" value="UniProtKB-KW"/>
</dbReference>
<dbReference type="GO" id="GO:0031177">
    <property type="term" value="F:phosphopantetheine binding"/>
    <property type="evidence" value="ECO:0007669"/>
    <property type="project" value="InterPro"/>
</dbReference>
<dbReference type="GO" id="GO:0008236">
    <property type="term" value="F:serine-type peptidase activity"/>
    <property type="evidence" value="ECO:0007669"/>
    <property type="project" value="InterPro"/>
</dbReference>
<dbReference type="GO" id="GO:0006633">
    <property type="term" value="P:fatty acid biosynthetic process"/>
    <property type="evidence" value="ECO:0007669"/>
    <property type="project" value="InterPro"/>
</dbReference>
<dbReference type="GO" id="GO:0032259">
    <property type="term" value="P:methylation"/>
    <property type="evidence" value="ECO:0007669"/>
    <property type="project" value="UniProtKB-KW"/>
</dbReference>
<dbReference type="GO" id="GO:0046189">
    <property type="term" value="P:phenol-containing compound biosynthetic process"/>
    <property type="evidence" value="ECO:0007669"/>
    <property type="project" value="UniProtKB-ARBA"/>
</dbReference>
<dbReference type="GO" id="GO:0030639">
    <property type="term" value="P:polyketide biosynthetic process"/>
    <property type="evidence" value="ECO:0007669"/>
    <property type="project" value="UniProtKB-ARBA"/>
</dbReference>
<dbReference type="GO" id="GO:0006508">
    <property type="term" value="P:proteolysis"/>
    <property type="evidence" value="ECO:0007669"/>
    <property type="project" value="InterPro"/>
</dbReference>
<dbReference type="GO" id="GO:0009403">
    <property type="term" value="P:toxin biosynthetic process"/>
    <property type="evidence" value="ECO:0007669"/>
    <property type="project" value="UniProtKB-ARBA"/>
</dbReference>
<dbReference type="CDD" id="cd02440">
    <property type="entry name" value="AdoMet_MTases"/>
    <property type="match status" value="1"/>
</dbReference>
<dbReference type="CDD" id="cd00833">
    <property type="entry name" value="PKS"/>
    <property type="match status" value="1"/>
</dbReference>
<dbReference type="Gene3D" id="3.30.70.3290">
    <property type="match status" value="1"/>
</dbReference>
<dbReference type="Gene3D" id="3.40.47.10">
    <property type="match status" value="1"/>
</dbReference>
<dbReference type="Gene3D" id="1.10.1200.10">
    <property type="entry name" value="ACP-like"/>
    <property type="match status" value="2"/>
</dbReference>
<dbReference type="Gene3D" id="3.40.50.1820">
    <property type="entry name" value="alpha/beta hydrolase"/>
    <property type="match status" value="1"/>
</dbReference>
<dbReference type="Gene3D" id="3.40.366.10">
    <property type="entry name" value="Malonyl-Coenzyme A Acyl Carrier Protein, domain 2"/>
    <property type="match status" value="2"/>
</dbReference>
<dbReference type="Gene3D" id="3.10.129.110">
    <property type="entry name" value="Polyketide synthase dehydratase"/>
    <property type="match status" value="1"/>
</dbReference>
<dbReference type="Gene3D" id="3.40.50.150">
    <property type="entry name" value="Vaccinia Virus protein VP39"/>
    <property type="match status" value="1"/>
</dbReference>
<dbReference type="InterPro" id="IPR013094">
    <property type="entry name" value="AB_hydrolase_3"/>
</dbReference>
<dbReference type="InterPro" id="IPR029058">
    <property type="entry name" value="AB_hydrolase_fold"/>
</dbReference>
<dbReference type="InterPro" id="IPR001227">
    <property type="entry name" value="Ac_transferase_dom_sf"/>
</dbReference>
<dbReference type="InterPro" id="IPR036736">
    <property type="entry name" value="ACP-like_sf"/>
</dbReference>
<dbReference type="InterPro" id="IPR014043">
    <property type="entry name" value="Acyl_transferase_dom"/>
</dbReference>
<dbReference type="InterPro" id="IPR016035">
    <property type="entry name" value="Acyl_Trfase/lysoPLipase"/>
</dbReference>
<dbReference type="InterPro" id="IPR018201">
    <property type="entry name" value="Ketoacyl_synth_AS"/>
</dbReference>
<dbReference type="InterPro" id="IPR014031">
    <property type="entry name" value="Ketoacyl_synth_C"/>
</dbReference>
<dbReference type="InterPro" id="IPR014030">
    <property type="entry name" value="Ketoacyl_synth_N"/>
</dbReference>
<dbReference type="InterPro" id="IPR016036">
    <property type="entry name" value="Malonyl_transacylase_ACP-bd"/>
</dbReference>
<dbReference type="InterPro" id="IPR013217">
    <property type="entry name" value="Methyltransf_12"/>
</dbReference>
<dbReference type="InterPro" id="IPR001375">
    <property type="entry name" value="Peptidase_S9_cat"/>
</dbReference>
<dbReference type="InterPro" id="IPR020841">
    <property type="entry name" value="PKS_Beta-ketoAc_synthase_dom"/>
</dbReference>
<dbReference type="InterPro" id="IPR042104">
    <property type="entry name" value="PKS_dehydratase_sf"/>
</dbReference>
<dbReference type="InterPro" id="IPR049551">
    <property type="entry name" value="PKS_DH_C"/>
</dbReference>
<dbReference type="InterPro" id="IPR049552">
    <property type="entry name" value="PKS_DH_N"/>
</dbReference>
<dbReference type="InterPro" id="IPR049900">
    <property type="entry name" value="PKS_mFAS_DH"/>
</dbReference>
<dbReference type="InterPro" id="IPR050091">
    <property type="entry name" value="PKS_NRPS_Biosynth_Enz"/>
</dbReference>
<dbReference type="InterPro" id="IPR020806">
    <property type="entry name" value="PKS_PP-bd"/>
</dbReference>
<dbReference type="InterPro" id="IPR009081">
    <property type="entry name" value="PP-bd_ACP"/>
</dbReference>
<dbReference type="InterPro" id="IPR006162">
    <property type="entry name" value="Ppantetheine_attach_site"/>
</dbReference>
<dbReference type="InterPro" id="IPR029063">
    <property type="entry name" value="SAM-dependent_MTases_sf"/>
</dbReference>
<dbReference type="InterPro" id="IPR032088">
    <property type="entry name" value="SAT"/>
</dbReference>
<dbReference type="InterPro" id="IPR016039">
    <property type="entry name" value="Thiolase-like"/>
</dbReference>
<dbReference type="PANTHER" id="PTHR43775">
    <property type="entry name" value="FATTY ACID SYNTHASE"/>
    <property type="match status" value="1"/>
</dbReference>
<dbReference type="PANTHER" id="PTHR43775:SF21">
    <property type="entry name" value="NON-REDUCING POLYKETIDE SYNTHASE AUSA-RELATED"/>
    <property type="match status" value="1"/>
</dbReference>
<dbReference type="Pfam" id="PF07859">
    <property type="entry name" value="Abhydrolase_3"/>
    <property type="match status" value="1"/>
</dbReference>
<dbReference type="Pfam" id="PF00698">
    <property type="entry name" value="Acyl_transf_1"/>
    <property type="match status" value="1"/>
</dbReference>
<dbReference type="Pfam" id="PF18558">
    <property type="entry name" value="HTH_51"/>
    <property type="match status" value="1"/>
</dbReference>
<dbReference type="Pfam" id="PF00109">
    <property type="entry name" value="ketoacyl-synt"/>
    <property type="match status" value="1"/>
</dbReference>
<dbReference type="Pfam" id="PF02801">
    <property type="entry name" value="Ketoacyl-synt_C"/>
    <property type="match status" value="1"/>
</dbReference>
<dbReference type="Pfam" id="PF08242">
    <property type="entry name" value="Methyltransf_12"/>
    <property type="match status" value="1"/>
</dbReference>
<dbReference type="Pfam" id="PF00326">
    <property type="entry name" value="Peptidase_S9"/>
    <property type="match status" value="1"/>
</dbReference>
<dbReference type="Pfam" id="PF21089">
    <property type="entry name" value="PKS_DH_N"/>
    <property type="match status" value="1"/>
</dbReference>
<dbReference type="Pfam" id="PF00550">
    <property type="entry name" value="PP-binding"/>
    <property type="match status" value="2"/>
</dbReference>
<dbReference type="Pfam" id="PF14765">
    <property type="entry name" value="PS-DH"/>
    <property type="match status" value="1"/>
</dbReference>
<dbReference type="Pfam" id="PF16073">
    <property type="entry name" value="SAT"/>
    <property type="match status" value="1"/>
</dbReference>
<dbReference type="SMART" id="SM00827">
    <property type="entry name" value="PKS_AT"/>
    <property type="match status" value="1"/>
</dbReference>
<dbReference type="SMART" id="SM00825">
    <property type="entry name" value="PKS_KS"/>
    <property type="match status" value="1"/>
</dbReference>
<dbReference type="SMART" id="SM00823">
    <property type="entry name" value="PKS_PP"/>
    <property type="match status" value="2"/>
</dbReference>
<dbReference type="SUPFAM" id="SSF47336">
    <property type="entry name" value="ACP-like"/>
    <property type="match status" value="2"/>
</dbReference>
<dbReference type="SUPFAM" id="SSF53474">
    <property type="entry name" value="alpha/beta-Hydrolases"/>
    <property type="match status" value="1"/>
</dbReference>
<dbReference type="SUPFAM" id="SSF52151">
    <property type="entry name" value="FabD/lysophospholipase-like"/>
    <property type="match status" value="1"/>
</dbReference>
<dbReference type="SUPFAM" id="SSF55048">
    <property type="entry name" value="Probable ACP-binding domain of malonyl-CoA ACP transacylase"/>
    <property type="match status" value="1"/>
</dbReference>
<dbReference type="SUPFAM" id="SSF53335">
    <property type="entry name" value="S-adenosyl-L-methionine-dependent methyltransferases"/>
    <property type="match status" value="1"/>
</dbReference>
<dbReference type="SUPFAM" id="SSF53901">
    <property type="entry name" value="Thiolase-like"/>
    <property type="match status" value="1"/>
</dbReference>
<dbReference type="PROSITE" id="PS50075">
    <property type="entry name" value="CARRIER"/>
    <property type="match status" value="2"/>
</dbReference>
<dbReference type="PROSITE" id="PS00606">
    <property type="entry name" value="KS3_1"/>
    <property type="match status" value="1"/>
</dbReference>
<dbReference type="PROSITE" id="PS52004">
    <property type="entry name" value="KS3_2"/>
    <property type="match status" value="1"/>
</dbReference>
<dbReference type="PROSITE" id="PS00012">
    <property type="entry name" value="PHOSPHOPANTETHEINE"/>
    <property type="match status" value="2"/>
</dbReference>
<dbReference type="PROSITE" id="PS52019">
    <property type="entry name" value="PKS_MFAS_DH"/>
    <property type="match status" value="1"/>
</dbReference>
<feature type="chain" id="PRO_0000449881" description="5-methylorsellinic acid synthase">
    <location>
        <begin position="1"/>
        <end position="2590"/>
    </location>
</feature>
<feature type="domain" description="Ketosynthase family 3 (KS3)" evidence="3 11">
    <location>
        <begin position="369"/>
        <end position="784"/>
    </location>
</feature>
<feature type="domain" description="PKS/mFAS DH" evidence="4">
    <location>
        <begin position="1263"/>
        <end position="1569"/>
    </location>
</feature>
<feature type="domain" description="Carrier 1" evidence="2 11">
    <location>
        <begin position="1617"/>
        <end position="1691"/>
    </location>
</feature>
<feature type="domain" description="Carrier 2" evidence="2 11">
    <location>
        <begin position="1736"/>
        <end position="1812"/>
    </location>
</feature>
<feature type="region of interest" description="N-terminal acylcarrier protein transacylase domain (SAT)" evidence="1 11">
    <location>
        <begin position="6"/>
        <end position="255"/>
    </location>
</feature>
<feature type="region of interest" description="Malonyl-CoA:ACP transacylase (MAT) domain" evidence="1 11">
    <location>
        <begin position="891"/>
        <end position="1191"/>
    </location>
</feature>
<feature type="region of interest" description="N-terminal hotdog fold" evidence="4">
    <location>
        <begin position="1263"/>
        <end position="1393"/>
    </location>
</feature>
<feature type="region of interest" description="Product template (PT) domain" evidence="1 11">
    <location>
        <begin position="1267"/>
        <end position="1568"/>
    </location>
</feature>
<feature type="region of interest" description="C-terminal hotdog fold" evidence="4">
    <location>
        <begin position="1421"/>
        <end position="1569"/>
    </location>
</feature>
<feature type="region of interest" description="Disordered" evidence="6">
    <location>
        <begin position="1587"/>
        <end position="1612"/>
    </location>
</feature>
<feature type="region of interest" description="Methyltransferase (CMeT) domain" evidence="1 11">
    <location>
        <begin position="1980"/>
        <end position="2212"/>
    </location>
</feature>
<feature type="region of interest" description="Thioesterase (TE) domain" evidence="1 11">
    <location>
        <begin position="2282"/>
        <end position="2590"/>
    </location>
</feature>
<feature type="active site" description="For beta-ketoacyl synthase activity" evidence="3">
    <location>
        <position position="534"/>
    </location>
</feature>
<feature type="active site" description="For beta-ketoacyl synthase activity" evidence="3">
    <location>
        <position position="669"/>
    </location>
</feature>
<feature type="active site" description="For beta-ketoacyl synthase activity" evidence="3">
    <location>
        <position position="707"/>
    </location>
</feature>
<feature type="active site" description="For acyl/malonyl transferase activity" evidence="5">
    <location>
        <position position="978"/>
    </location>
</feature>
<feature type="active site" description="Proton acceptor; for dehydratase activity" evidence="4">
    <location>
        <position position="1297"/>
    </location>
</feature>
<feature type="active site" description="Proton donor; for dehydratase activity" evidence="4">
    <location>
        <position position="1481"/>
    </location>
</feature>
<feature type="modified residue" description="O-(pantetheine 4'-phosphoryl)serine" evidence="2">
    <location>
        <position position="1651"/>
    </location>
</feature>
<feature type="modified residue" description="O-(pantetheine 4'-phosphoryl)serine" evidence="2">
    <location>
        <position position="1772"/>
    </location>
</feature>
<feature type="mutagenesis site" description="Abolishes the production of both 2,4-dihydroxy 5,6-dimethyl benzaldehyde and 5-methylorsellinic acid; when associated with A-1772." evidence="7">
    <original>S</original>
    <variation>A</variation>
    <location>
        <position position="1651"/>
    </location>
</feature>
<feature type="mutagenesis site" description="Abolishes the production of both 2,4-dihydroxy 5,6-dimethyl benzaldehyde and 5-methylorsellinic acid; when associated with A-1651." evidence="7">
    <original>S</original>
    <variation>A</variation>
    <location>
        <position position="1772"/>
    </location>
</feature>
<sequence length="2590" mass="283675">MTPTLLLCGSQAIQWSEDYLSSLREMLLADSALQPLVHAIRDLPQLWATLLEADTALHKMPGKQTLDRFTRWLDGERLLEKDSPSDLNMIMSPLTVIMQLVEYISHLHQSNLTHLQILDGAKHGGIQGFCTGFLAAITLSISRDESDVAELGTVALRLATCIGAYVDLDQCNSSGFACLAVRWPTAADERKVKDILETYNGAYLSVRSDVASATLTVPRAAKSSIIDELSNIGAHVKDIPLSGRFHNQVNRELFAKLAALCKSTIGLQFPGHCRPLVPLRSNADGELLSGNEALHVAALNSLLLHVSDWHKTVSKAMDSLSQTTAEPEVSVLGLGDCIPRTIRQSRALHVSHIKTGSTQSHDDPYQYPGDSIAIVGMGCRFPGADSLEEYWKVIESATSMLGDLPEGRFPKTNLRRDPNGKIPLNGNFLRHPDLWDHRFFKRSSREAASMDPQHRLALEVAYEALESAGYFAQRSPAKDIGCYMGVAASDYEDNVASHAPTAFSVLGMVRAFTSGKISHFFGLSGPSLVFDTACSSSLVAIHTACRALQANECSMALAGGVNVITSPTLHQNLGAANFLSPTGGSKSFDDRADGYCRGEGAGIVLLKRLDRAIAEKDRILGVIAGSAVNQNDNAYPVTVPVSMSQTALYRRVLDMSGLSPRPVSYVEAHGTGTPKGDPIECASIREVFGGQVNRKLYFGSVKANIGHAEAASGVAGLIKVLLMMQKRSIPPQALFASLNKSIPPLEPDNMAIAQRVTPWSEEFYAACVNNYGAAGSNAALIVTQPPNIRRGSHAGVALKNCPILLSANTAGSLRQTTVVLREFLAHNRAISENDLLKSTAFHLAKRFNPSFKYRHSFSVASLNQLDEKLQICSQLPDSEFLLPPNHRPVVLAFGGQTGNVVHLSEGVYRGSSILRKYLDKCDMQLRQLGLTSIFPTIFEQKSIEDTIQLHCTMFSLQYASAMAWIAAGLQVQTVIGHSFGQLTAMCVAGVLSLVDAIRLIAGRATIIQEKWGAERGCMLLVQGELALVQKLISQAREATSHVVEIACFNGPNSFVLVGSEADIDAFDGLAASSLKTRKMAVTHGFHSRFVDTIMDDYQKLADSLEYKSPTIAIETCSSGETWDMFTADKVAKQSRQPVYFAEAVERIAQRLGSCTWIEAGSGSGITSMARRALNDTTNHDFHAVNLGGPEPWAAFADTTVSLWQAGVQVDYWPFHKEQQLEYLPLNLPPYQFERSRHWLAYVDRPGADGLIQSKETQSVETKPKLVSFVKYLDSNRQTAEFSIGQDCEQYQALVRGHAVLANTLCPAALYVEMAAYAASLLVPDFSPSTYTSRVEDLHMQSPLAIDLKRGLRLVLSSSGSGTWQFIMQSFSLSDSDNATQHASGTVNISSLTSEKLQSRFSRYKRIVNYERCESLLSDSGTSAIQGSLVYKMFDKVVVYSDIFRGVSKIASRGHEVTGQVSLPSAGLELVKDSVCNPLVVDNFTQVAGLHVNSLDDCGSNEVYLCNGIEQIDACKPLDASGSWLVHSSFDRVGTRELVNDIFVFDASTKELVMTLFGLRFAKVPTASLKRALERANTVQNPVQTPSLKVTEPSANVPKAQPVSTYPKPMKPAPAADAQIRTATMALLNEVADVPLSDIADGAQLEDLGIDSLMAAELLSAIRERFNLDIPTSTFASIVDFKGLYQHIASGTDAGILTPSSSGMESDDSILEVQYTDTSTPFSEIAYPLEDKDAGDSAQAGQIAQLSQLFAEHLECPLPIPSGETLRDIGLDSLVGMELAADIQQAFGRKVDLATLDPECTFGQFCDMVIPKPTLSVPTVSEKVDKTVRWASTEIAYTAKRENKMQDPVEMQSDGGNVNYLAHCAEDFAQIRKNYTTFAKQTGFADFRANVYPQQKELVCAYVTEAFAALGSDLKTIPSGSPLPPIQHIARHAKVMKQYYKVLEDSGLITITDNGPIRTAKPVSPVKSEDLYQMIYSAFPQHRGEHKLLNSTGSKLASCLKGETDPLQILFGSKASKDLMEDVYTNSPMFATGTRILGDFFVKTFSKYKGPEKLRILELGAGTGGTTKYIVEKLLEHNIPFTYTFTDLSPSLVALAKRKFSHYGCLEFLVLDIEKTPPEHLTNSYHAILSSNCVHATKNLLNSTTNTRKLLRADGFLCLLELTRNLFWLDCVFGLLEGWWLFEDGRKHVLADEYLWKETLLEAGFRHVDWSDDDTEESDQFRVITGFVADIGHNALDQAKPVTTKLPTMETTSFATVDGIPLLADIYYPTKPDAPGVKRPIALMIHGGGHIMLSRRDIRPKQTRLLLERGLLPVSIEYRLCPEVSLTEGPIPDACAALNWVRTVLPTLRLQRPDIHPNGDKVAVVGWSTGGTLSMMLAFSAPQRGIRPPDAILAFYCPTDYEAEFFRTPNYPEDTSEVVPEIYDILEGVQERPITAYNVPAHQGATGGWMSLSDPRSRIALHMNWRGQMMPVLLDGLPSKKTLLEAGGDASPSKWMDLPQPSVDRLRAVSPYAQIVQGNYRVPTFLVHGTRDDLIPWEQSVRTKDALTSQGVAAGVAVVDDAVHLFDLYRDPEGRYWNAVLEGYEFLLRHL</sequence>
<gene>
    <name type="ORF">ATEG_03629</name>
</gene>
<comment type="function">
    <text evidence="7 8 12">Non-reducing polyketide synthase; part of the cluster A that mediates the biosynthesis of azasperpyranones, members of the azaphilone family that exhibit anti-cancer activities (PubMed:31908094). Azasperpyranones are synthesized by 2 clusters, A and B (PubMed:31908094). Cluster A is responsible for the production of the polyhydric phenol moiety while the azaphilonoid scaffold is produced by the cluster B (PubMed:31908094). The non-reducing polyketide synthase ATEG_03629 produces 5-methyl orsellinic acid, which is then reduced to 5-methyl orsellinic aldehyde by the NRPS-like protein ATEG_03630 (PubMed:24412543). 5-methyl orsellinic aldehyde is then first hydroxylated by the FAD-dependent monooxygenase ATEG_03635 and subsequently hydroxylated by the cytochrome P450 monooxygenase ATEG_03631 to produce the unstable polyhydric phenol precursor of azasperpyranones (PubMed:31908094). On the other hand, the polyketide synthase ATEG_07659 is responsible for producing the 3,5-dimethyloctadienone moiety from acetyl-CoA, three malonyl-CoA, and two S-adenosyl methionines (SAM) (Probable). The 3,5-dimethyloctadienone moiety is then loaded onto the SAT domain of ATEG_07661 and extended with four malonyl-CoA and one SAM, which leads to the formation of 2,4-dihydroxy-6-(5,7-dimethyl-2-oxo-trans-3-trans-5-nonadienyl)-3-methylbenzaldehyde (compound 8) after reductive release and aldol condensation (Probable). The FAD-dependent monooxygenase ATEG_07662 is the next enzyme in the biosynthesis sequence and hydroxylates the side chain at the benzylic position of compound 8 (Probable). In Aspergillus nidulans, afoF, the ortholog of the FAD-dependent oxygenase ATEG_07660, is the key enzyme for the biosynthesis of asperfuranone by catalyzing the hydroxylation at C-8 of to prevent the formation of a six-membered ring hemiacetal intermediate and thus facilitating the formation of a five-membered ring to produce asperfuranone (Probable). In Aspergillus terreus, ATEG_07660 is probably not functional, which leads to the formation of the six-membered ring hemiacetal intermediate presperpyranone instead of asperfuranone (Probable). Finally, ATEG_03636 is involved in the condensation of the polyhydric phenol moiety produced by cluster A and the perasperpyranone precursor produced by cluster B, to yield azasperpyranone A (Probable). Further modifications of azasperpyranone A result in the production of derivatives, including azasperpyranone B to F (PubMed:31908094).</text>
</comment>
<comment type="catalytic activity">
    <reaction evidence="7 8">
        <text>3 malonyl-CoA + acetyl-CoA + S-adenosyl-L-methionine + H(+) = 5-methylorsellinate + S-adenosyl-L-homocysteine + 3 CO2 + 4 CoA</text>
        <dbReference type="Rhea" id="RHEA:63056"/>
        <dbReference type="ChEBI" id="CHEBI:15378"/>
        <dbReference type="ChEBI" id="CHEBI:16526"/>
        <dbReference type="ChEBI" id="CHEBI:57287"/>
        <dbReference type="ChEBI" id="CHEBI:57288"/>
        <dbReference type="ChEBI" id="CHEBI:57384"/>
        <dbReference type="ChEBI" id="CHEBI:57856"/>
        <dbReference type="ChEBI" id="CHEBI:59789"/>
        <dbReference type="ChEBI" id="CHEBI:146172"/>
    </reaction>
    <physiologicalReaction direction="left-to-right" evidence="7 8">
        <dbReference type="Rhea" id="RHEA:63057"/>
    </physiologicalReaction>
</comment>
<comment type="pathway">
    <text evidence="7 8">Secondary metabolite biosynthesis.</text>
</comment>
<comment type="induction">
    <text evidence="8">Expression is induced by the azasperpyranone cluster A-specific transcription factor ATEG_03638 which is itself regulated by the azasperpyranone transcriptional regulator ATEG_07667.</text>
</comment>
<comment type="domain">
    <text evidence="12">Multidomain protein; including a starter unit:ACP transacylase (SAT) that selects the starter unit; a ketosynthase (KS) that catalyzes repeated decarboxylative condensation to elongate the polyketide backbone; a malonyl-CoA:ACP transacylase (MAT) that selects and transfers the extender unit malonyl-CoA; a product template (PT) domain that controls the immediate cyclization regioselectivity of the reactive polyketide backbone; and 2 acyl-carrier proteins (ACPs) that serve as the tether of the growing and completed polyketide via its phosphopantetheinyl arm.</text>
</comment>
<comment type="disruption phenotype">
    <text evidence="8">Abolishes the production of 5-methyl orsellinic acid and azasperpyranone A (AZA-A).</text>
</comment>
<comment type="biotechnology">
    <text evidence="8">Azasperpyranones display potential anti-cancer activities (PubMed:31908094). Azasperpyranones A, C, D, and F exhibit potent growth-inhibitory activity against the A549, HepG2, HCT-116, and HL-60 cell lines, with IC(50) values of 2.39-14.42 mm, respectively (PubMed:31908094). Moreover, azasperpyranone D significantly inhibits HCT-116 xenograft tumor growth in BALB/c-nu mice (PubMed:31908094). In addition, azasperpyranones A and C can bind with four kinds of therapeutic targets for cancer, eEF2K, FGFR, survivin, and TNF-a (PubMed:31908094).</text>
</comment>
<name>5MOAS_ASPTN</name>
<accession>Q0CRQ5</accession>
<organism>
    <name type="scientific">Aspergillus terreus (strain NIH 2624 / FGSC A1156)</name>
    <dbReference type="NCBI Taxonomy" id="341663"/>
    <lineage>
        <taxon>Eukaryota</taxon>
        <taxon>Fungi</taxon>
        <taxon>Dikarya</taxon>
        <taxon>Ascomycota</taxon>
        <taxon>Pezizomycotina</taxon>
        <taxon>Eurotiomycetes</taxon>
        <taxon>Eurotiomycetidae</taxon>
        <taxon>Eurotiales</taxon>
        <taxon>Aspergillaceae</taxon>
        <taxon>Aspergillus</taxon>
        <taxon>Aspergillus subgen. Circumdati</taxon>
    </lineage>
</organism>
<protein>
    <recommendedName>
        <fullName evidence="9">5-methylorsellinic acid synthase</fullName>
        <ecNumber evidence="7 8">2.3.1.-</ecNumber>
    </recommendedName>
    <alternativeName>
        <fullName evidence="10">Azasperpyranone A biosynthesis cluster A protein ATEG_03629</fullName>
    </alternativeName>
    <alternativeName>
        <fullName evidence="9">Non-reducing polyketide synthase ATEG_03629</fullName>
        <shortName evidence="9">NR-PKS ATEG_03629</shortName>
    </alternativeName>
</protein>